<proteinExistence type="evidence at protein level"/>
<gene>
    <name type="primary">xynB</name>
    <name type="synonym">xyn10B</name>
    <name type="ordered locus">CJA_3280</name>
</gene>
<keyword id="KW-0119">Carbohydrate metabolism</keyword>
<keyword id="KW-0136">Cellulose degradation</keyword>
<keyword id="KW-0903">Direct protein sequencing</keyword>
<keyword id="KW-1015">Disulfide bond</keyword>
<keyword id="KW-0326">Glycosidase</keyword>
<keyword id="KW-0378">Hydrolase</keyword>
<keyword id="KW-0624">Polysaccharide degradation</keyword>
<keyword id="KW-1185">Reference proteome</keyword>
<keyword id="KW-0732">Signal</keyword>
<keyword id="KW-0858">Xylan degradation</keyword>
<accession>P23030</accession>
<accession>B3PEH8</accession>
<dbReference type="EC" id="3.2.1.8"/>
<dbReference type="EMBL" id="X54523">
    <property type="protein sequence ID" value="CAA38389.1"/>
    <property type="molecule type" value="Genomic_DNA"/>
</dbReference>
<dbReference type="EMBL" id="CP000934">
    <property type="protein sequence ID" value="ACE84499.1"/>
    <property type="molecule type" value="Genomic_DNA"/>
</dbReference>
<dbReference type="RefSeq" id="WP_012488856.1">
    <property type="nucleotide sequence ID" value="NC_010995.1"/>
</dbReference>
<dbReference type="SMR" id="P23030"/>
<dbReference type="STRING" id="498211.CJA_3280"/>
<dbReference type="CAZy" id="CBM2">
    <property type="family name" value="Carbohydrate-Binding Module Family 2"/>
</dbReference>
<dbReference type="CAZy" id="CBM35">
    <property type="family name" value="Carbohydrate-Binding Module Family 35"/>
</dbReference>
<dbReference type="CAZy" id="GH10">
    <property type="family name" value="Glycoside Hydrolase Family 10"/>
</dbReference>
<dbReference type="KEGG" id="cja:CJA_3280"/>
<dbReference type="eggNOG" id="COG3693">
    <property type="taxonomic scope" value="Bacteria"/>
</dbReference>
<dbReference type="HOGENOM" id="CLU_029617_0_0_6"/>
<dbReference type="OrthoDB" id="4241492at2"/>
<dbReference type="UniPathway" id="UPA00697"/>
<dbReference type="Proteomes" id="UP000001036">
    <property type="component" value="Chromosome"/>
</dbReference>
<dbReference type="GO" id="GO:0031176">
    <property type="term" value="F:endo-1,4-beta-xylanase activity"/>
    <property type="evidence" value="ECO:0007669"/>
    <property type="project" value="UniProtKB-EC"/>
</dbReference>
<dbReference type="GO" id="GO:0030247">
    <property type="term" value="F:polysaccharide binding"/>
    <property type="evidence" value="ECO:0007669"/>
    <property type="project" value="InterPro"/>
</dbReference>
<dbReference type="GO" id="GO:0030245">
    <property type="term" value="P:cellulose catabolic process"/>
    <property type="evidence" value="ECO:0007669"/>
    <property type="project" value="UniProtKB-KW"/>
</dbReference>
<dbReference type="GO" id="GO:0045493">
    <property type="term" value="P:xylan catabolic process"/>
    <property type="evidence" value="ECO:0007669"/>
    <property type="project" value="UniProtKB-KW"/>
</dbReference>
<dbReference type="CDD" id="cd04082">
    <property type="entry name" value="CBM35_pectate_lyase-like"/>
    <property type="match status" value="1"/>
</dbReference>
<dbReference type="Gene3D" id="2.60.40.290">
    <property type="match status" value="1"/>
</dbReference>
<dbReference type="Gene3D" id="2.60.120.260">
    <property type="entry name" value="Galactose-binding domain-like"/>
    <property type="match status" value="1"/>
</dbReference>
<dbReference type="Gene3D" id="3.20.20.80">
    <property type="entry name" value="Glycosidases"/>
    <property type="match status" value="1"/>
</dbReference>
<dbReference type="InterPro" id="IPR001919">
    <property type="entry name" value="CBD2"/>
</dbReference>
<dbReference type="InterPro" id="IPR008965">
    <property type="entry name" value="CBM2/CBM3_carb-bd_dom_sf"/>
</dbReference>
<dbReference type="InterPro" id="IPR012291">
    <property type="entry name" value="CBM2_carb-bd_dom_sf"/>
</dbReference>
<dbReference type="InterPro" id="IPR018366">
    <property type="entry name" value="CBM2_CS"/>
</dbReference>
<dbReference type="InterPro" id="IPR005084">
    <property type="entry name" value="CBM6"/>
</dbReference>
<dbReference type="InterPro" id="IPR008979">
    <property type="entry name" value="Galactose-bd-like_sf"/>
</dbReference>
<dbReference type="InterPro" id="IPR044846">
    <property type="entry name" value="GH10"/>
</dbReference>
<dbReference type="InterPro" id="IPR031158">
    <property type="entry name" value="GH10_AS"/>
</dbReference>
<dbReference type="InterPro" id="IPR001000">
    <property type="entry name" value="GH10_dom"/>
</dbReference>
<dbReference type="InterPro" id="IPR017853">
    <property type="entry name" value="Glycoside_hydrolase_SF"/>
</dbReference>
<dbReference type="PANTHER" id="PTHR31490:SF88">
    <property type="entry name" value="BETA-XYLANASE"/>
    <property type="match status" value="1"/>
</dbReference>
<dbReference type="PANTHER" id="PTHR31490">
    <property type="entry name" value="GLYCOSYL HYDROLASE"/>
    <property type="match status" value="1"/>
</dbReference>
<dbReference type="Pfam" id="PF00553">
    <property type="entry name" value="CBM_2"/>
    <property type="match status" value="1"/>
</dbReference>
<dbReference type="Pfam" id="PF03422">
    <property type="entry name" value="CBM_6"/>
    <property type="match status" value="1"/>
</dbReference>
<dbReference type="Pfam" id="PF00331">
    <property type="entry name" value="Glyco_hydro_10"/>
    <property type="match status" value="1"/>
</dbReference>
<dbReference type="PRINTS" id="PR00134">
    <property type="entry name" value="GLHYDRLASE10"/>
</dbReference>
<dbReference type="SMART" id="SM00637">
    <property type="entry name" value="CBD_II"/>
    <property type="match status" value="1"/>
</dbReference>
<dbReference type="SMART" id="SM00633">
    <property type="entry name" value="Glyco_10"/>
    <property type="match status" value="1"/>
</dbReference>
<dbReference type="SUPFAM" id="SSF51445">
    <property type="entry name" value="(Trans)glycosidases"/>
    <property type="match status" value="1"/>
</dbReference>
<dbReference type="SUPFAM" id="SSF49384">
    <property type="entry name" value="Carbohydrate-binding domain"/>
    <property type="match status" value="1"/>
</dbReference>
<dbReference type="SUPFAM" id="SSF49785">
    <property type="entry name" value="Galactose-binding domain-like"/>
    <property type="match status" value="1"/>
</dbReference>
<dbReference type="PROSITE" id="PS51173">
    <property type="entry name" value="CBM2"/>
    <property type="match status" value="1"/>
</dbReference>
<dbReference type="PROSITE" id="PS00561">
    <property type="entry name" value="CBM2_A"/>
    <property type="match status" value="1"/>
</dbReference>
<dbReference type="PROSITE" id="PS51175">
    <property type="entry name" value="CBM6"/>
    <property type="match status" value="1"/>
</dbReference>
<dbReference type="PROSITE" id="PS00591">
    <property type="entry name" value="GH10_1"/>
    <property type="match status" value="1"/>
</dbReference>
<dbReference type="PROSITE" id="PS51760">
    <property type="entry name" value="GH10_2"/>
    <property type="match status" value="1"/>
</dbReference>
<evidence type="ECO:0000250" key="1"/>
<evidence type="ECO:0000255" key="2">
    <source>
        <dbReference type="PROSITE-ProRule" id="PRU00523"/>
    </source>
</evidence>
<evidence type="ECO:0000255" key="3">
    <source>
        <dbReference type="PROSITE-ProRule" id="PRU01096"/>
    </source>
</evidence>
<evidence type="ECO:0000255" key="4">
    <source>
        <dbReference type="PROSITE-ProRule" id="PRU01135"/>
    </source>
</evidence>
<evidence type="ECO:0000255" key="5">
    <source>
        <dbReference type="PROSITE-ProRule" id="PRU10061"/>
    </source>
</evidence>
<evidence type="ECO:0000269" key="6">
    <source>
    </source>
</evidence>
<evidence type="ECO:0000305" key="7"/>
<organism>
    <name type="scientific">Cellvibrio japonicus (strain Ueda107)</name>
    <name type="common">Pseudomonas fluorescens subsp. cellulosa</name>
    <dbReference type="NCBI Taxonomy" id="498211"/>
    <lineage>
        <taxon>Bacteria</taxon>
        <taxon>Pseudomonadati</taxon>
        <taxon>Pseudomonadota</taxon>
        <taxon>Gammaproteobacteria</taxon>
        <taxon>Cellvibrionales</taxon>
        <taxon>Cellvibrionaceae</taxon>
        <taxon>Cellvibrio</taxon>
    </lineage>
</organism>
<protein>
    <recommendedName>
        <fullName>Endo-1,4-beta-xylanase B</fullName>
        <shortName>Xylanase B</shortName>
        <ecNumber>3.2.1.8</ecNumber>
    </recommendedName>
    <alternativeName>
        <fullName>1,4-beta-D-xylan xylanohydrolase B</fullName>
    </alternativeName>
</protein>
<name>XYNB_CELJU</name>
<comment type="function">
    <text>Xylanase B contributes to hydrolyze hemicellulose, the major component of plant cell-walls.</text>
</comment>
<comment type="catalytic activity">
    <reaction>
        <text>Endohydrolysis of (1-&gt;4)-beta-D-xylosidic linkages in xylans.</text>
        <dbReference type="EC" id="3.2.1.8"/>
    </reaction>
</comment>
<comment type="pathway">
    <text>Glycan metabolism; hemicellulose degradation.</text>
</comment>
<comment type="similarity">
    <text evidence="7">Belongs to the glycosyl hydrolase 10 (cellulase F) family.</text>
</comment>
<reference key="1">
    <citation type="journal article" date="1990" name="Biochem. J.">
        <title>Xylanase B and an arabinofuranosidase from Pseudomonas fluorescens subsp. cellulosa contain identical cellulose-binding domains and are encoded by adjacent genes.</title>
        <authorList>
            <person name="Kellett L.E."/>
            <person name="Poole D.M."/>
            <person name="Ferreira L.M.A."/>
            <person name="Durrant A.J."/>
            <person name="Hazlewood G.P."/>
            <person name="Gilbert H.J."/>
        </authorList>
    </citation>
    <scope>NUCLEOTIDE SEQUENCE [GENOMIC DNA]</scope>
    <scope>PROTEIN SEQUENCE OF 38-46</scope>
</reference>
<reference key="2">
    <citation type="journal article" date="2008" name="J. Bacteriol.">
        <title>Insights into plant cell wall degradation from the genome sequence of the soil bacterium Cellvibrio japonicus.</title>
        <authorList>
            <person name="DeBoy R.T."/>
            <person name="Mongodin E.F."/>
            <person name="Fouts D.E."/>
            <person name="Tailford L.E."/>
            <person name="Khouri H."/>
            <person name="Emerson J.B."/>
            <person name="Mohamoud Y."/>
            <person name="Watkins K."/>
            <person name="Henrissat B."/>
            <person name="Gilbert H.J."/>
            <person name="Nelson K.E."/>
        </authorList>
    </citation>
    <scope>NUCLEOTIDE SEQUENCE [LARGE SCALE GENOMIC DNA]</scope>
    <source>
        <strain>Ueda107</strain>
    </source>
</reference>
<feature type="signal peptide" evidence="6">
    <location>
        <begin position="1"/>
        <end position="37"/>
    </location>
</feature>
<feature type="chain" id="PRO_0000007978" description="Endo-1,4-beta-xylanase B">
    <location>
        <begin position="38"/>
        <end position="599"/>
    </location>
</feature>
<feature type="domain" description="CBM2" evidence="4">
    <location>
        <begin position="38"/>
        <end position="136"/>
    </location>
</feature>
<feature type="domain" description="CBM6" evidence="2">
    <location>
        <begin position="163"/>
        <end position="289"/>
    </location>
</feature>
<feature type="domain" description="GH10" evidence="3">
    <location>
        <begin position="315"/>
        <end position="595"/>
    </location>
</feature>
<feature type="active site" description="Proton donor" evidence="1">
    <location>
        <position position="431"/>
    </location>
</feature>
<feature type="active site" description="Nucleophile" evidence="5">
    <location>
        <position position="530"/>
    </location>
</feature>
<feature type="disulfide bond" evidence="1">
    <location>
        <begin position="39"/>
        <end position="133"/>
    </location>
</feature>
<feature type="sequence conflict" description="In Ref. 1; CAA38389." evidence="7" ref="1">
    <original>LWGYVVGRTWIEGSGLIQDNGTPRPAMTWLINNYLN</original>
    <variation>SGICGGQDLDRRLRFDPGQWHTAPGNDVVD</variation>
    <location>
        <begin position="563"/>
        <end position="598"/>
    </location>
</feature>
<sequence>MTISASDYRHPGNFLKRTTALLCVGTALTALAFNASAACTYTIDSEWSTGFTANITLKNDTGAAINNWNVNWQYSSNRMTSGWNANFSGTNPYNATNMSWNGSIAPGQSISFGLQGEKNGSTAERPTVTGAACNSATTSSVASSSSTPTTSSSSASSVASALLLQEAQAGFCRVDGTIDNNHTGFTGSGFANTNNAQGAAVVWAIDATSSGRRTLTIRYANGGTANRNGSLVINGGSNGNYTVSLPTTGAWTTWQTATIDVDLVQGNNIVQLSATTAEGLPNIDSLSVVGGTVRAGNCGSVSSSSSVQSSSSSSSSSAASAKKFIGNITTSGAVRSDFTRYWNQITPENESKWGSVEGTRNVYNWAPLDRIYAYARQNNIPVKAHTFVWGAQSPSWLNNLSGPEVAVEIEQWIRDYCARYPDTAMIDVVNEAVPGHQPAGYAQRAFGNNWIQRVFQLARQYCPNSILILNDYNNIRWQHNEFIALAKAQGNYIDAVGLQAHELKGMTAAQVKTAIDNIWNQVGKPIYISEYDIGDTNDQVQLQNFQAHFPVFYNHPHVHGITLWGYVVGRTWIEGSGLIQDNGTPRPAMTWLINNYLNQ</sequence>